<accession>C4ZVY1</accession>
<sequence>MTQLAIGKPAPLGAHYDGQGVNFTLFSAHAERVELCVFDANGQEHRYDLPGHSGDIWHGYLPDARPGLRYGYRVHGPWQPAEGHRFNPAKLLIDPCARQIDGEFKDNPLLHAGHNEPDYRDNAAIAPKCVVVVDHYDWEDDAPPRTPWGSTIIYEAHVKGLTYLHPEIPVEIRGTYKALGHPVMINYLKQLGITALELLPVAQFASEPRLQRMGLSNYWGYNPVAMFALHPAYACSPETALDEFRDAIKALHKAGIEVILDIVLNHSAELDLDGPLFSLRGIDNRSYYWIREDGDYHNWTGCGNTLNLSHPAVVDYASACLRYWVETCHVDGFRFDLAAVMGRTPEFRQDAPLFTAIQNCPVLSQVKLIAEPWDIAPGGYQVGNFPPLFAEWNDHFRDAARRFWLHYDLPLGAFAGRFAASSDVFKRNGRLPSAAINLVTAHDGFTLRDCVCFNHKHNEANGEENRDGTNNNYSNNHGKEGLGGSLDLVERRRDSIHALLTTLLLSQGTPMLLAGDEHGHSQHGNNNAYCQDNQLTWLDWSQASSGLTAFTAALIHLRKRIPALVENRWWEEGDGNVRWLNRYAQPLSTDEWQNGPKQLQILLSDRFLIAINATLEVTEIVLPAGEWHAIPPFAGEDNPVITAVWQGPAHGLCVFQR</sequence>
<protein>
    <recommendedName>
        <fullName evidence="1">Glycogen debranching enzyme</fullName>
        <ecNumber evidence="1">3.2.1.196</ecNumber>
    </recommendedName>
    <alternativeName>
        <fullName evidence="1">Limit dextrin alpha-1,6-maltotetraose-hydrolase</fullName>
    </alternativeName>
</protein>
<gene>
    <name evidence="1" type="primary">glgX</name>
    <name type="ordered locus">BWG_3123</name>
</gene>
<feature type="chain" id="PRO_1000214104" description="Glycogen debranching enzyme">
    <location>
        <begin position="1"/>
        <end position="657"/>
    </location>
</feature>
<feature type="region of interest" description="Disordered" evidence="2">
    <location>
        <begin position="458"/>
        <end position="479"/>
    </location>
</feature>
<feature type="compositionally biased region" description="Basic and acidic residues" evidence="2">
    <location>
        <begin position="458"/>
        <end position="467"/>
    </location>
</feature>
<feature type="active site" description="Nucleophile" evidence="1">
    <location>
        <position position="336"/>
    </location>
</feature>
<feature type="active site" description="Proton donor" evidence="1">
    <location>
        <position position="371"/>
    </location>
</feature>
<feature type="site" description="Transition state stabilizer" evidence="1">
    <location>
        <position position="443"/>
    </location>
</feature>
<comment type="function">
    <text evidence="1">Removes maltotriose and maltotetraose chains that are attached by 1,6-alpha-linkage to the limit dextrin main chain, generating a debranched limit dextrin.</text>
</comment>
<comment type="catalytic activity">
    <reaction evidence="1">
        <text>Hydrolysis of (1-&gt;6)-alpha-D-glucosidic linkages to branches with degrees of polymerization of three or four glucose residues in limit dextrin.</text>
        <dbReference type="EC" id="3.2.1.196"/>
    </reaction>
</comment>
<comment type="pathway">
    <text evidence="1">Glycan degradation; glycogen degradation.</text>
</comment>
<comment type="similarity">
    <text evidence="1">Belongs to the glycosyl hydrolase 13 family.</text>
</comment>
<name>GLGX_ECOBW</name>
<keyword id="KW-0119">Carbohydrate metabolism</keyword>
<keyword id="KW-0321">Glycogen metabolism</keyword>
<keyword id="KW-0326">Glycosidase</keyword>
<keyword id="KW-0378">Hydrolase</keyword>
<reference key="1">
    <citation type="journal article" date="2009" name="J. Bacteriol.">
        <title>Genomic sequencing reveals regulatory mutations and recombinational events in the widely used MC4100 lineage of Escherichia coli K-12.</title>
        <authorList>
            <person name="Ferenci T."/>
            <person name="Zhou Z."/>
            <person name="Betteridge T."/>
            <person name="Ren Y."/>
            <person name="Liu Y."/>
            <person name="Feng L."/>
            <person name="Reeves P.R."/>
            <person name="Wang L."/>
        </authorList>
    </citation>
    <scope>NUCLEOTIDE SEQUENCE [LARGE SCALE GENOMIC DNA]</scope>
    <source>
        <strain>K12 / MC4100 / BW2952</strain>
    </source>
</reference>
<organism>
    <name type="scientific">Escherichia coli (strain K12 / MC4100 / BW2952)</name>
    <dbReference type="NCBI Taxonomy" id="595496"/>
    <lineage>
        <taxon>Bacteria</taxon>
        <taxon>Pseudomonadati</taxon>
        <taxon>Pseudomonadota</taxon>
        <taxon>Gammaproteobacteria</taxon>
        <taxon>Enterobacterales</taxon>
        <taxon>Enterobacteriaceae</taxon>
        <taxon>Escherichia</taxon>
    </lineage>
</organism>
<dbReference type="EC" id="3.2.1.196" evidence="1"/>
<dbReference type="EMBL" id="CP001396">
    <property type="protein sequence ID" value="ACR63372.1"/>
    <property type="molecule type" value="Genomic_DNA"/>
</dbReference>
<dbReference type="RefSeq" id="WP_000192523.1">
    <property type="nucleotide sequence ID" value="NC_012759.1"/>
</dbReference>
<dbReference type="SMR" id="C4ZVY1"/>
<dbReference type="CAZy" id="CBM48">
    <property type="family name" value="Carbohydrate-Binding Module Family 48"/>
</dbReference>
<dbReference type="CAZy" id="GH13">
    <property type="family name" value="Glycoside Hydrolase Family 13"/>
</dbReference>
<dbReference type="GeneID" id="75202276"/>
<dbReference type="KEGG" id="ebw:BWG_3123"/>
<dbReference type="HOGENOM" id="CLU_011725_1_1_6"/>
<dbReference type="UniPathway" id="UPA00165"/>
<dbReference type="GO" id="GO:0004133">
    <property type="term" value="F:glycogen debranching enzyme activity"/>
    <property type="evidence" value="ECO:0007669"/>
    <property type="project" value="UniProtKB-UniRule"/>
</dbReference>
<dbReference type="GO" id="GO:0004553">
    <property type="term" value="F:hydrolase activity, hydrolyzing O-glycosyl compounds"/>
    <property type="evidence" value="ECO:0007669"/>
    <property type="project" value="InterPro"/>
</dbReference>
<dbReference type="GO" id="GO:0005980">
    <property type="term" value="P:glycogen catabolic process"/>
    <property type="evidence" value="ECO:0007669"/>
    <property type="project" value="UniProtKB-UniRule"/>
</dbReference>
<dbReference type="CDD" id="cd11326">
    <property type="entry name" value="AmyAc_Glg_debranch"/>
    <property type="match status" value="1"/>
</dbReference>
<dbReference type="CDD" id="cd02856">
    <property type="entry name" value="E_set_GDE_Isoamylase_N"/>
    <property type="match status" value="1"/>
</dbReference>
<dbReference type="FunFam" id="2.60.40.10:FF:000468">
    <property type="entry name" value="Glycogen debranching enzyme"/>
    <property type="match status" value="1"/>
</dbReference>
<dbReference type="FunFam" id="3.20.20.80:FF:000031">
    <property type="entry name" value="Glycogen debranching enzyme"/>
    <property type="match status" value="1"/>
</dbReference>
<dbReference type="Gene3D" id="3.20.20.80">
    <property type="entry name" value="Glycosidases"/>
    <property type="match status" value="1"/>
</dbReference>
<dbReference type="Gene3D" id="2.60.40.1180">
    <property type="entry name" value="Golgi alpha-mannosidase II"/>
    <property type="match status" value="1"/>
</dbReference>
<dbReference type="Gene3D" id="2.60.40.10">
    <property type="entry name" value="Immunoglobulins"/>
    <property type="match status" value="1"/>
</dbReference>
<dbReference type="HAMAP" id="MF_01248">
    <property type="entry name" value="GlgX"/>
    <property type="match status" value="1"/>
</dbReference>
<dbReference type="InterPro" id="IPR040784">
    <property type="entry name" value="GlgX_C"/>
</dbReference>
<dbReference type="InterPro" id="IPR044505">
    <property type="entry name" value="GlgX_Isoamylase_N_E_set"/>
</dbReference>
<dbReference type="InterPro" id="IPR006047">
    <property type="entry name" value="Glyco_hydro_13_cat_dom"/>
</dbReference>
<dbReference type="InterPro" id="IPR004193">
    <property type="entry name" value="Glyco_hydro_13_N"/>
</dbReference>
<dbReference type="InterPro" id="IPR013780">
    <property type="entry name" value="Glyco_hydro_b"/>
</dbReference>
<dbReference type="InterPro" id="IPR022844">
    <property type="entry name" value="Glycogen_debranch_bac"/>
</dbReference>
<dbReference type="InterPro" id="IPR011837">
    <property type="entry name" value="Glycogen_debranch_GlgX"/>
</dbReference>
<dbReference type="InterPro" id="IPR017853">
    <property type="entry name" value="Glycoside_hydrolase_SF"/>
</dbReference>
<dbReference type="InterPro" id="IPR013783">
    <property type="entry name" value="Ig-like_fold"/>
</dbReference>
<dbReference type="InterPro" id="IPR014756">
    <property type="entry name" value="Ig_E-set"/>
</dbReference>
<dbReference type="NCBIfam" id="TIGR02100">
    <property type="entry name" value="glgX_debranch"/>
    <property type="match status" value="1"/>
</dbReference>
<dbReference type="NCBIfam" id="NF002983">
    <property type="entry name" value="PRK03705.1"/>
    <property type="match status" value="1"/>
</dbReference>
<dbReference type="PANTHER" id="PTHR43002">
    <property type="entry name" value="GLYCOGEN DEBRANCHING ENZYME"/>
    <property type="match status" value="1"/>
</dbReference>
<dbReference type="Pfam" id="PF00128">
    <property type="entry name" value="Alpha-amylase"/>
    <property type="match status" value="1"/>
</dbReference>
<dbReference type="Pfam" id="PF02922">
    <property type="entry name" value="CBM_48"/>
    <property type="match status" value="1"/>
</dbReference>
<dbReference type="Pfam" id="PF18390">
    <property type="entry name" value="GlgX_C"/>
    <property type="match status" value="1"/>
</dbReference>
<dbReference type="SMART" id="SM00642">
    <property type="entry name" value="Aamy"/>
    <property type="match status" value="1"/>
</dbReference>
<dbReference type="SUPFAM" id="SSF51445">
    <property type="entry name" value="(Trans)glycosidases"/>
    <property type="match status" value="1"/>
</dbReference>
<dbReference type="SUPFAM" id="SSF81296">
    <property type="entry name" value="E set domains"/>
    <property type="match status" value="1"/>
</dbReference>
<proteinExistence type="inferred from homology"/>
<evidence type="ECO:0000255" key="1">
    <source>
        <dbReference type="HAMAP-Rule" id="MF_01248"/>
    </source>
</evidence>
<evidence type="ECO:0000256" key="2">
    <source>
        <dbReference type="SAM" id="MobiDB-lite"/>
    </source>
</evidence>